<feature type="chain" id="PRO_0000126245" description="Large ribosomal subunit protein bL36">
    <location>
        <begin position="1"/>
        <end position="41"/>
    </location>
</feature>
<name>RL36_RHIME</name>
<gene>
    <name evidence="1" type="primary">rpmJ</name>
    <name type="ordered locus">R02787</name>
    <name type="ORF">SMc04003</name>
</gene>
<protein>
    <recommendedName>
        <fullName evidence="1">Large ribosomal subunit protein bL36</fullName>
    </recommendedName>
    <alternativeName>
        <fullName evidence="2">50S ribosomal protein L36</fullName>
    </alternativeName>
</protein>
<keyword id="KW-1185">Reference proteome</keyword>
<keyword id="KW-0687">Ribonucleoprotein</keyword>
<keyword id="KW-0689">Ribosomal protein</keyword>
<comment type="similarity">
    <text evidence="1">Belongs to the bacterial ribosomal protein bL36 family.</text>
</comment>
<organism>
    <name type="scientific">Rhizobium meliloti (strain 1021)</name>
    <name type="common">Ensifer meliloti</name>
    <name type="synonym">Sinorhizobium meliloti</name>
    <dbReference type="NCBI Taxonomy" id="266834"/>
    <lineage>
        <taxon>Bacteria</taxon>
        <taxon>Pseudomonadati</taxon>
        <taxon>Pseudomonadota</taxon>
        <taxon>Alphaproteobacteria</taxon>
        <taxon>Hyphomicrobiales</taxon>
        <taxon>Rhizobiaceae</taxon>
        <taxon>Sinorhizobium/Ensifer group</taxon>
        <taxon>Sinorhizobium</taxon>
    </lineage>
</organism>
<sequence length="41" mass="5005">MKIKNSLKSLKTRHRENRLVRRKGRVYIINKLNPRFKARQG</sequence>
<reference key="1">
    <citation type="journal article" date="2001" name="Proc. Natl. Acad. Sci. U.S.A.">
        <title>Analysis of the chromosome sequence of the legume symbiont Sinorhizobium meliloti strain 1021.</title>
        <authorList>
            <person name="Capela D."/>
            <person name="Barloy-Hubler F."/>
            <person name="Gouzy J."/>
            <person name="Bothe G."/>
            <person name="Ampe F."/>
            <person name="Batut J."/>
            <person name="Boistard P."/>
            <person name="Becker A."/>
            <person name="Boutry M."/>
            <person name="Cadieu E."/>
            <person name="Dreano S."/>
            <person name="Gloux S."/>
            <person name="Godrie T."/>
            <person name="Goffeau A."/>
            <person name="Kahn D."/>
            <person name="Kiss E."/>
            <person name="Lelaure V."/>
            <person name="Masuy D."/>
            <person name="Pohl T."/>
            <person name="Portetelle D."/>
            <person name="Puehler A."/>
            <person name="Purnelle B."/>
            <person name="Ramsperger U."/>
            <person name="Renard C."/>
            <person name="Thebault P."/>
            <person name="Vandenbol M."/>
            <person name="Weidner S."/>
            <person name="Galibert F."/>
        </authorList>
    </citation>
    <scope>NUCLEOTIDE SEQUENCE [LARGE SCALE GENOMIC DNA]</scope>
    <source>
        <strain>1021</strain>
    </source>
</reference>
<reference key="2">
    <citation type="journal article" date="2001" name="Science">
        <title>The composite genome of the legume symbiont Sinorhizobium meliloti.</title>
        <authorList>
            <person name="Galibert F."/>
            <person name="Finan T.M."/>
            <person name="Long S.R."/>
            <person name="Puehler A."/>
            <person name="Abola P."/>
            <person name="Ampe F."/>
            <person name="Barloy-Hubler F."/>
            <person name="Barnett M.J."/>
            <person name="Becker A."/>
            <person name="Boistard P."/>
            <person name="Bothe G."/>
            <person name="Boutry M."/>
            <person name="Bowser L."/>
            <person name="Buhrmester J."/>
            <person name="Cadieu E."/>
            <person name="Capela D."/>
            <person name="Chain P."/>
            <person name="Cowie A."/>
            <person name="Davis R.W."/>
            <person name="Dreano S."/>
            <person name="Federspiel N.A."/>
            <person name="Fisher R.F."/>
            <person name="Gloux S."/>
            <person name="Godrie T."/>
            <person name="Goffeau A."/>
            <person name="Golding B."/>
            <person name="Gouzy J."/>
            <person name="Gurjal M."/>
            <person name="Hernandez-Lucas I."/>
            <person name="Hong A."/>
            <person name="Huizar L."/>
            <person name="Hyman R.W."/>
            <person name="Jones T."/>
            <person name="Kahn D."/>
            <person name="Kahn M.L."/>
            <person name="Kalman S."/>
            <person name="Keating D.H."/>
            <person name="Kiss E."/>
            <person name="Komp C."/>
            <person name="Lelaure V."/>
            <person name="Masuy D."/>
            <person name="Palm C."/>
            <person name="Peck M.C."/>
            <person name="Pohl T.M."/>
            <person name="Portetelle D."/>
            <person name="Purnelle B."/>
            <person name="Ramsperger U."/>
            <person name="Surzycki R."/>
            <person name="Thebault P."/>
            <person name="Vandenbol M."/>
            <person name="Vorhoelter F.J."/>
            <person name="Weidner S."/>
            <person name="Wells D.H."/>
            <person name="Wong K."/>
            <person name="Yeh K.-C."/>
            <person name="Batut J."/>
        </authorList>
    </citation>
    <scope>NUCLEOTIDE SEQUENCE [LARGE SCALE GENOMIC DNA]</scope>
    <source>
        <strain>1021</strain>
    </source>
</reference>
<accession>Q92M65</accession>
<dbReference type="EMBL" id="AL591688">
    <property type="protein sequence ID" value="CAC47366.1"/>
    <property type="molecule type" value="Genomic_DNA"/>
</dbReference>
<dbReference type="RefSeq" id="NP_386893.1">
    <property type="nucleotide sequence ID" value="NC_003047.1"/>
</dbReference>
<dbReference type="SMR" id="Q92M65"/>
<dbReference type="EnsemblBacteria" id="CAC47366">
    <property type="protein sequence ID" value="CAC47366"/>
    <property type="gene ID" value="SMc04003"/>
</dbReference>
<dbReference type="KEGG" id="sme:SMc04003"/>
<dbReference type="PATRIC" id="fig|266834.11.peg.4299"/>
<dbReference type="eggNOG" id="COG0257">
    <property type="taxonomic scope" value="Bacteria"/>
</dbReference>
<dbReference type="HOGENOM" id="CLU_135723_3_0_5"/>
<dbReference type="OrthoDB" id="9801558at2"/>
<dbReference type="Proteomes" id="UP000001976">
    <property type="component" value="Chromosome"/>
</dbReference>
<dbReference type="GO" id="GO:1990904">
    <property type="term" value="C:ribonucleoprotein complex"/>
    <property type="evidence" value="ECO:0007669"/>
    <property type="project" value="UniProtKB-KW"/>
</dbReference>
<dbReference type="GO" id="GO:0005840">
    <property type="term" value="C:ribosome"/>
    <property type="evidence" value="ECO:0007669"/>
    <property type="project" value="UniProtKB-KW"/>
</dbReference>
<dbReference type="GO" id="GO:0003735">
    <property type="term" value="F:structural constituent of ribosome"/>
    <property type="evidence" value="ECO:0007669"/>
    <property type="project" value="InterPro"/>
</dbReference>
<dbReference type="GO" id="GO:0006412">
    <property type="term" value="P:translation"/>
    <property type="evidence" value="ECO:0007669"/>
    <property type="project" value="UniProtKB-UniRule"/>
</dbReference>
<dbReference type="HAMAP" id="MF_00251">
    <property type="entry name" value="Ribosomal_bL36"/>
    <property type="match status" value="1"/>
</dbReference>
<dbReference type="InterPro" id="IPR000473">
    <property type="entry name" value="Ribosomal_bL36"/>
</dbReference>
<dbReference type="InterPro" id="IPR035977">
    <property type="entry name" value="Ribosomal_bL36_sp"/>
</dbReference>
<dbReference type="InterPro" id="IPR047621">
    <property type="entry name" value="Ribosomal_L36_bact"/>
</dbReference>
<dbReference type="NCBIfam" id="NF002021">
    <property type="entry name" value="PRK00831.1"/>
    <property type="match status" value="1"/>
</dbReference>
<dbReference type="NCBIfam" id="TIGR01022">
    <property type="entry name" value="rpmJ_bact"/>
    <property type="match status" value="1"/>
</dbReference>
<dbReference type="PANTHER" id="PTHR47781">
    <property type="entry name" value="50S RIBOSOMAL PROTEIN L36 2"/>
    <property type="match status" value="1"/>
</dbReference>
<dbReference type="PANTHER" id="PTHR47781:SF1">
    <property type="entry name" value="LARGE RIBOSOMAL SUBUNIT PROTEIN BL36B"/>
    <property type="match status" value="1"/>
</dbReference>
<dbReference type="Pfam" id="PF00444">
    <property type="entry name" value="Ribosomal_L36"/>
    <property type="match status" value="1"/>
</dbReference>
<dbReference type="SUPFAM" id="SSF57840">
    <property type="entry name" value="Ribosomal protein L36"/>
    <property type="match status" value="1"/>
</dbReference>
<dbReference type="PROSITE" id="PS00828">
    <property type="entry name" value="RIBOSOMAL_L36"/>
    <property type="match status" value="1"/>
</dbReference>
<evidence type="ECO:0000255" key="1">
    <source>
        <dbReference type="HAMAP-Rule" id="MF_00251"/>
    </source>
</evidence>
<evidence type="ECO:0000305" key="2"/>
<proteinExistence type="inferred from homology"/>